<protein>
    <recommendedName>
        <fullName>Regucalcin</fullName>
        <shortName>RC</shortName>
    </recommendedName>
    <alternativeName>
        <fullName>Gluconolactonase</fullName>
        <shortName>GNL</shortName>
        <ecNumber>3.1.1.17</ecNumber>
    </alternativeName>
</protein>
<proteinExistence type="evidence at transcript level"/>
<comment type="function">
    <text evidence="1">Gluconolactonase with low activity towards other sugar lactones, including gulonolactone and galactonolactone. Catalyzes a key step in ascorbic acid (vitamin C) biosynthesis. Can also hydrolyze diisopropyl phosphorofluoridate and phenylacetate (in vitro). Calcium-binding protein. Modulates Ca(2+) signaling, and Ca(2+)-dependent cellular processes and enzyme activities (By similarity).</text>
</comment>
<comment type="catalytic activity">
    <reaction>
        <text>D-glucono-1,5-lactone + H2O = D-gluconate + H(+)</text>
        <dbReference type="Rhea" id="RHEA:10440"/>
        <dbReference type="ChEBI" id="CHEBI:15377"/>
        <dbReference type="ChEBI" id="CHEBI:15378"/>
        <dbReference type="ChEBI" id="CHEBI:16217"/>
        <dbReference type="ChEBI" id="CHEBI:18391"/>
        <dbReference type="EC" id="3.1.1.17"/>
    </reaction>
</comment>
<comment type="cofactor">
    <cofactor evidence="1">
        <name>Zn(2+)</name>
        <dbReference type="ChEBI" id="CHEBI:29105"/>
    </cofactor>
    <cofactor evidence="1">
        <name>Mn(2+)</name>
        <dbReference type="ChEBI" id="CHEBI:29035"/>
    </cofactor>
    <cofactor evidence="1">
        <name>Ca(2+)</name>
        <dbReference type="ChEBI" id="CHEBI:29108"/>
    </cofactor>
    <cofactor evidence="1">
        <name>Mg(2+)</name>
        <dbReference type="ChEBI" id="CHEBI:18420"/>
    </cofactor>
    <text evidence="1">Binds 1 divalent metal cation per subunit. Most active with Zn(2+) and Mn(2+) ions. The physiological cofactor is most likely Ca(2+) or Mg(2+).</text>
</comment>
<comment type="pathway">
    <text>Cofactor biosynthesis; L-ascorbate biosynthesis via UDP-alpha-D-glucuronate pathway; L-ascorbate from UDP-alpha-D-glucuronate: step 3/4.</text>
</comment>
<comment type="subcellular location">
    <subcellularLocation>
        <location evidence="2">Cytoplasm</location>
    </subcellularLocation>
</comment>
<comment type="similarity">
    <text evidence="2">Belongs to the SMP-30/CGR1 family.</text>
</comment>
<organism>
    <name type="scientific">Danio rerio</name>
    <name type="common">Zebrafish</name>
    <name type="synonym">Brachydanio rerio</name>
    <dbReference type="NCBI Taxonomy" id="7955"/>
    <lineage>
        <taxon>Eukaryota</taxon>
        <taxon>Metazoa</taxon>
        <taxon>Chordata</taxon>
        <taxon>Craniata</taxon>
        <taxon>Vertebrata</taxon>
        <taxon>Euteleostomi</taxon>
        <taxon>Actinopterygii</taxon>
        <taxon>Neopterygii</taxon>
        <taxon>Teleostei</taxon>
        <taxon>Ostariophysi</taxon>
        <taxon>Cypriniformes</taxon>
        <taxon>Danionidae</taxon>
        <taxon>Danioninae</taxon>
        <taxon>Danio</taxon>
    </lineage>
</organism>
<gene>
    <name evidence="2" type="primary">rgn</name>
    <name type="ORF">zgc:92078</name>
</gene>
<reference evidence="4" key="1">
    <citation type="journal article" date="2004" name="Proc. Natl. Acad. Sci. U.S.A.">
        <title>Hematopoietic gene expression profile in zebrafish kidney marrow.</title>
        <authorList>
            <person name="Song H.-D."/>
            <person name="Sun X.-J."/>
            <person name="Deng M."/>
            <person name="Zhang G.-W."/>
            <person name="Zhou Y."/>
            <person name="Wu X.-Y."/>
            <person name="Sheng Y."/>
            <person name="Chen Y."/>
            <person name="Ruan Z."/>
            <person name="Jiang C.-L."/>
            <person name="Fan H.-Y."/>
            <person name="Zon L.I."/>
            <person name="Kanki J.P."/>
            <person name="Liu T.X."/>
            <person name="Look A.T."/>
            <person name="Chen Z."/>
        </authorList>
    </citation>
    <scope>NUCLEOTIDE SEQUENCE [LARGE SCALE MRNA]</scope>
    <source>
        <tissue evidence="4">Kidney marrow</tissue>
    </source>
</reference>
<reference evidence="3" key="2">
    <citation type="submission" date="2004-07" db="EMBL/GenBank/DDBJ databases">
        <authorList>
            <consortium name="NIH - Zebrafish Gene Collection (ZGC) project"/>
        </authorList>
    </citation>
    <scope>NUCLEOTIDE SEQUENCE [LARGE SCALE MRNA]</scope>
</reference>
<accession>Q6TLF6</accession>
<keyword id="KW-0060">Ascorbate biosynthesis</keyword>
<keyword id="KW-0106">Calcium</keyword>
<keyword id="KW-0963">Cytoplasm</keyword>
<keyword id="KW-0378">Hydrolase</keyword>
<keyword id="KW-0479">Metal-binding</keyword>
<keyword id="KW-1185">Reference proteome</keyword>
<sequence>MSSIKVECVIKEKNEVGESPVWEEKDSSLLYVDITGQKVSRWSSLTKQIESMNTEKLVGCVVPRQAGGYVIAEGTRFAFVDWVKRSITAVAEVNEKPNTRFNDGKVDPAGRFFAGTMSMDMKPDVVDAALYNLQPDHSVVRHFDQVHLSNGLDWSLDHRVFYYIDSLAFMVEAFDYDIQTGGLSNRRTVYKMEKDEGIPDGMCIDTEGKLWVACFNGGRVLRIDPQTGKRLQTVKLPAERITSCCFGGKDYSDLYITSAYIGMDAEALAKQPEAGCTFKVTGLGVKGIPPYSYTG</sequence>
<evidence type="ECO:0000250" key="1"/>
<evidence type="ECO:0000250" key="2">
    <source>
        <dbReference type="UniProtKB" id="Q03336"/>
    </source>
</evidence>
<evidence type="ECO:0000312" key="3">
    <source>
        <dbReference type="EMBL" id="AAH75882.1"/>
    </source>
</evidence>
<evidence type="ECO:0000312" key="4">
    <source>
        <dbReference type="EMBL" id="AAQ94576.1"/>
    </source>
</evidence>
<feature type="chain" id="PRO_0000287685" description="Regucalcin">
    <location>
        <begin position="1"/>
        <end position="295"/>
    </location>
</feature>
<feature type="active site" description="Proton donor/acceptor" evidence="1">
    <location>
        <position position="200"/>
    </location>
</feature>
<feature type="binding site" evidence="1">
    <location>
        <position position="18"/>
    </location>
    <ligand>
        <name>a divalent metal cation</name>
        <dbReference type="ChEBI" id="CHEBI:60240"/>
    </ligand>
</feature>
<feature type="binding site" evidence="1">
    <location>
        <position position="100"/>
    </location>
    <ligand>
        <name>substrate</name>
    </ligand>
</feature>
<feature type="binding site" evidence="1">
    <location>
        <position position="102"/>
    </location>
    <ligand>
        <name>substrate</name>
    </ligand>
</feature>
<feature type="binding site" evidence="1">
    <location>
        <position position="120"/>
    </location>
    <ligand>
        <name>substrate</name>
    </ligand>
</feature>
<feature type="binding site" evidence="1">
    <location>
        <position position="150"/>
    </location>
    <ligand>
        <name>a divalent metal cation</name>
        <dbReference type="ChEBI" id="CHEBI:60240"/>
    </ligand>
</feature>
<feature type="binding site" evidence="1">
    <location>
        <position position="200"/>
    </location>
    <ligand>
        <name>a divalent metal cation</name>
        <dbReference type="ChEBI" id="CHEBI:60240"/>
    </ligand>
</feature>
<dbReference type="EC" id="3.1.1.17"/>
<dbReference type="EMBL" id="AY394949">
    <property type="protein sequence ID" value="AAQ94576.1"/>
    <property type="molecule type" value="mRNA"/>
</dbReference>
<dbReference type="EMBL" id="BC075882">
    <property type="protein sequence ID" value="AAH75882.1"/>
    <property type="molecule type" value="mRNA"/>
</dbReference>
<dbReference type="RefSeq" id="NP_991309.1">
    <property type="nucleotide sequence ID" value="NM_205746.1"/>
</dbReference>
<dbReference type="SMR" id="Q6TLF6"/>
<dbReference type="FunCoup" id="Q6TLF6">
    <property type="interactions" value="500"/>
</dbReference>
<dbReference type="STRING" id="7955.ENSDARP00000130159"/>
<dbReference type="PaxDb" id="7955-ENSDARP00000126252"/>
<dbReference type="DNASU" id="403070"/>
<dbReference type="Ensembl" id="ENSDART00000162588">
    <property type="protein sequence ID" value="ENSDARP00000130159"/>
    <property type="gene ID" value="ENSDARG00000098645"/>
</dbReference>
<dbReference type="GeneID" id="403070"/>
<dbReference type="KEGG" id="dre:403070"/>
<dbReference type="AGR" id="ZFIN:ZDB-GENE-040718-68"/>
<dbReference type="CTD" id="9104"/>
<dbReference type="ZFIN" id="ZDB-GENE-040718-68">
    <property type="gene designation" value="rgn"/>
</dbReference>
<dbReference type="eggNOG" id="KOG4499">
    <property type="taxonomic scope" value="Eukaryota"/>
</dbReference>
<dbReference type="HOGENOM" id="CLU_036110_3_2_1"/>
<dbReference type="InParanoid" id="Q6TLF6"/>
<dbReference type="OMA" id="LWRCRAD"/>
<dbReference type="OrthoDB" id="423498at2759"/>
<dbReference type="PhylomeDB" id="Q6TLF6"/>
<dbReference type="TreeFam" id="TF323663"/>
<dbReference type="UniPathway" id="UPA00991">
    <property type="reaction ID" value="UER00938"/>
</dbReference>
<dbReference type="PRO" id="PR:Q6TLF6"/>
<dbReference type="Proteomes" id="UP000000437">
    <property type="component" value="Alternate scaffold 6"/>
</dbReference>
<dbReference type="Proteomes" id="UP000000437">
    <property type="component" value="Chromosome 6"/>
</dbReference>
<dbReference type="Bgee" id="ENSDARG00000098645">
    <property type="expression patterns" value="Expressed in liver and 19 other cell types or tissues"/>
</dbReference>
<dbReference type="GO" id="GO:0005737">
    <property type="term" value="C:cytoplasm"/>
    <property type="evidence" value="ECO:0000250"/>
    <property type="project" value="UniProtKB"/>
</dbReference>
<dbReference type="GO" id="GO:0005634">
    <property type="term" value="C:nucleus"/>
    <property type="evidence" value="ECO:0000250"/>
    <property type="project" value="UniProtKB"/>
</dbReference>
<dbReference type="GO" id="GO:0005509">
    <property type="term" value="F:calcium ion binding"/>
    <property type="evidence" value="ECO:0000250"/>
    <property type="project" value="UniProtKB"/>
</dbReference>
<dbReference type="GO" id="GO:0030234">
    <property type="term" value="F:enzyme regulator activity"/>
    <property type="evidence" value="ECO:0007669"/>
    <property type="project" value="InterPro"/>
</dbReference>
<dbReference type="GO" id="GO:0004341">
    <property type="term" value="F:gluconolactonase activity"/>
    <property type="evidence" value="ECO:0000250"/>
    <property type="project" value="UniProtKB"/>
</dbReference>
<dbReference type="GO" id="GO:0008270">
    <property type="term" value="F:zinc ion binding"/>
    <property type="evidence" value="ECO:0000250"/>
    <property type="project" value="UniProtKB"/>
</dbReference>
<dbReference type="GO" id="GO:0006874">
    <property type="term" value="P:intracellular calcium ion homeostasis"/>
    <property type="evidence" value="ECO:0000250"/>
    <property type="project" value="UniProtKB"/>
</dbReference>
<dbReference type="GO" id="GO:0019853">
    <property type="term" value="P:L-ascorbic acid biosynthetic process"/>
    <property type="evidence" value="ECO:0000250"/>
    <property type="project" value="UniProtKB"/>
</dbReference>
<dbReference type="GO" id="GO:0032781">
    <property type="term" value="P:positive regulation of ATP-dependent activity"/>
    <property type="evidence" value="ECO:0000250"/>
    <property type="project" value="UniProtKB"/>
</dbReference>
<dbReference type="GO" id="GO:0050848">
    <property type="term" value="P:regulation of calcium-mediated signaling"/>
    <property type="evidence" value="ECO:0000250"/>
    <property type="project" value="UniProtKB"/>
</dbReference>
<dbReference type="FunFam" id="2.120.10.30:FF:000027">
    <property type="entry name" value="Regucalcin homologue"/>
    <property type="match status" value="1"/>
</dbReference>
<dbReference type="Gene3D" id="2.120.10.30">
    <property type="entry name" value="TolB, C-terminal domain"/>
    <property type="match status" value="1"/>
</dbReference>
<dbReference type="InterPro" id="IPR011042">
    <property type="entry name" value="6-blade_b-propeller_TolB-like"/>
</dbReference>
<dbReference type="InterPro" id="IPR008367">
    <property type="entry name" value="Regucalcin"/>
</dbReference>
<dbReference type="InterPro" id="IPR013658">
    <property type="entry name" value="SGL"/>
</dbReference>
<dbReference type="InterPro" id="IPR005511">
    <property type="entry name" value="SMP-30"/>
</dbReference>
<dbReference type="PANTHER" id="PTHR10907">
    <property type="entry name" value="REGUCALCIN"/>
    <property type="match status" value="1"/>
</dbReference>
<dbReference type="PANTHER" id="PTHR10907:SF47">
    <property type="entry name" value="REGUCALCIN"/>
    <property type="match status" value="1"/>
</dbReference>
<dbReference type="Pfam" id="PF08450">
    <property type="entry name" value="SGL"/>
    <property type="match status" value="1"/>
</dbReference>
<dbReference type="PRINTS" id="PR01791">
    <property type="entry name" value="REGUCALCIN"/>
</dbReference>
<dbReference type="PRINTS" id="PR01790">
    <property type="entry name" value="SMP30FAMILY"/>
</dbReference>
<dbReference type="SUPFAM" id="SSF63829">
    <property type="entry name" value="Calcium-dependent phosphotriesterase"/>
    <property type="match status" value="1"/>
</dbReference>
<name>RGN_DANRE</name>